<evidence type="ECO:0000250" key="1">
    <source>
        <dbReference type="UniProtKB" id="Q5BKR2"/>
    </source>
</evidence>
<evidence type="ECO:0000250" key="2">
    <source>
        <dbReference type="UniProtKB" id="Q86UD5"/>
    </source>
</evidence>
<evidence type="ECO:0000256" key="3">
    <source>
        <dbReference type="SAM" id="MobiDB-lite"/>
    </source>
</evidence>
<evidence type="ECO:0000269" key="4">
    <source>
    </source>
</evidence>
<evidence type="ECO:0000305" key="5"/>
<evidence type="ECO:0007744" key="6">
    <source>
        <dbReference type="PDB" id="7P1I"/>
    </source>
</evidence>
<evidence type="ECO:0007829" key="7">
    <source>
        <dbReference type="PDB" id="7P1I"/>
    </source>
</evidence>
<evidence type="ECO:0007829" key="8">
    <source>
        <dbReference type="PDB" id="7P1J"/>
    </source>
</evidence>
<organism>
    <name type="scientific">Bison bison bison</name>
    <name type="common">North American plains bison</name>
    <dbReference type="NCBI Taxonomy" id="43346"/>
    <lineage>
        <taxon>Eukaryota</taxon>
        <taxon>Metazoa</taxon>
        <taxon>Chordata</taxon>
        <taxon>Craniata</taxon>
        <taxon>Vertebrata</taxon>
        <taxon>Euteleostomi</taxon>
        <taxon>Mammalia</taxon>
        <taxon>Eutheria</taxon>
        <taxon>Laurasiatheria</taxon>
        <taxon>Artiodactyla</taxon>
        <taxon>Ruminantia</taxon>
        <taxon>Pecora</taxon>
        <taxon>Bovidae</taxon>
        <taxon>Bovinae</taxon>
        <taxon>Bison</taxon>
    </lineage>
</organism>
<name>SL9B2_BISBB</name>
<gene>
    <name type="primary">SLC9B2</name>
    <name type="synonym">NHA2</name>
    <name type="synonym">NHEDC2</name>
</gene>
<proteinExistence type="evidence at protein level"/>
<dbReference type="RefSeq" id="XP_010846571.1">
    <property type="nucleotide sequence ID" value="XM_010848269.1"/>
</dbReference>
<dbReference type="RefSeq" id="XP_010846572.1">
    <property type="nucleotide sequence ID" value="XM_010848270.1"/>
</dbReference>
<dbReference type="RefSeq" id="XP_010846573.1">
    <property type="nucleotide sequence ID" value="XM_010848271.1"/>
</dbReference>
<dbReference type="PDB" id="7P1I">
    <property type="method" value="EM"/>
    <property type="resolution" value="3.15 A"/>
    <property type="chains" value="A/B=1-535"/>
</dbReference>
<dbReference type="PDB" id="7P1J">
    <property type="method" value="EM"/>
    <property type="resolution" value="3.04 A"/>
    <property type="chains" value="A/B=1-535"/>
</dbReference>
<dbReference type="PDB" id="7P1K">
    <property type="method" value="EM"/>
    <property type="resolution" value="3.64 A"/>
    <property type="chains" value="A/B=1-535"/>
</dbReference>
<dbReference type="PDBsum" id="7P1I"/>
<dbReference type="PDBsum" id="7P1J"/>
<dbReference type="PDBsum" id="7P1K"/>
<dbReference type="EMDB" id="EMD-13161"/>
<dbReference type="EMDB" id="EMD-13162"/>
<dbReference type="EMDB" id="EMD-13163"/>
<dbReference type="SMR" id="A0A6P3HVI0"/>
<dbReference type="Ensembl" id="ENSBBBT00000026436">
    <property type="protein sequence ID" value="ENSBBBP00000027096"/>
    <property type="gene ID" value="ENSBBBG00000023217"/>
</dbReference>
<dbReference type="GeneID" id="104994629"/>
<dbReference type="KEGG" id="bbis:104994629"/>
<dbReference type="CTD" id="133308"/>
<dbReference type="OrthoDB" id="39239at91561"/>
<dbReference type="Proteomes" id="UP000515208">
    <property type="component" value="Unplaced"/>
</dbReference>
<dbReference type="GO" id="GO:0016324">
    <property type="term" value="C:apical plasma membrane"/>
    <property type="evidence" value="ECO:0000250"/>
    <property type="project" value="UniProtKB"/>
</dbReference>
<dbReference type="GO" id="GO:0016323">
    <property type="term" value="C:basolateral plasma membrane"/>
    <property type="evidence" value="ECO:0000250"/>
    <property type="project" value="UniProtKB"/>
</dbReference>
<dbReference type="GO" id="GO:0010008">
    <property type="term" value="C:endosome membrane"/>
    <property type="evidence" value="ECO:0000250"/>
    <property type="project" value="UniProtKB"/>
</dbReference>
<dbReference type="GO" id="GO:0005765">
    <property type="term" value="C:lysosomal membrane"/>
    <property type="evidence" value="ECO:0007669"/>
    <property type="project" value="UniProtKB-SubCell"/>
</dbReference>
<dbReference type="GO" id="GO:0031966">
    <property type="term" value="C:mitochondrial membrane"/>
    <property type="evidence" value="ECO:0007669"/>
    <property type="project" value="UniProtKB-SubCell"/>
</dbReference>
<dbReference type="GO" id="GO:0005886">
    <property type="term" value="C:plasma membrane"/>
    <property type="evidence" value="ECO:0000314"/>
    <property type="project" value="UniProtKB"/>
</dbReference>
<dbReference type="GO" id="GO:0055037">
    <property type="term" value="C:recycling endosome"/>
    <property type="evidence" value="ECO:0000250"/>
    <property type="project" value="UniProtKB"/>
</dbReference>
<dbReference type="GO" id="GO:0055038">
    <property type="term" value="C:recycling endosome membrane"/>
    <property type="evidence" value="ECO:0007669"/>
    <property type="project" value="UniProtKB-SubCell"/>
</dbReference>
<dbReference type="GO" id="GO:0097228">
    <property type="term" value="C:sperm principal piece"/>
    <property type="evidence" value="ECO:0000250"/>
    <property type="project" value="UniProtKB"/>
</dbReference>
<dbReference type="GO" id="GO:0030672">
    <property type="term" value="C:synaptic vesicle membrane"/>
    <property type="evidence" value="ECO:0000250"/>
    <property type="project" value="UniProtKB"/>
</dbReference>
<dbReference type="GO" id="GO:0042802">
    <property type="term" value="F:identical protein binding"/>
    <property type="evidence" value="ECO:0000314"/>
    <property type="project" value="UniProtKB"/>
</dbReference>
<dbReference type="GO" id="GO:0010348">
    <property type="term" value="F:lithium:proton antiporter activity"/>
    <property type="evidence" value="ECO:0000314"/>
    <property type="project" value="UniProtKB"/>
</dbReference>
<dbReference type="GO" id="GO:0046872">
    <property type="term" value="F:metal ion binding"/>
    <property type="evidence" value="ECO:0007669"/>
    <property type="project" value="UniProtKB-KW"/>
</dbReference>
<dbReference type="GO" id="GO:0015385">
    <property type="term" value="F:sodium:proton antiporter activity"/>
    <property type="evidence" value="ECO:0000314"/>
    <property type="project" value="UniProtKB"/>
</dbReference>
<dbReference type="GO" id="GO:0072583">
    <property type="term" value="P:clathrin-dependent endocytosis"/>
    <property type="evidence" value="ECO:0007669"/>
    <property type="project" value="Ensembl"/>
</dbReference>
<dbReference type="GO" id="GO:0030317">
    <property type="term" value="P:flagellated sperm motility"/>
    <property type="evidence" value="ECO:0007669"/>
    <property type="project" value="Ensembl"/>
</dbReference>
<dbReference type="GO" id="GO:0010351">
    <property type="term" value="P:lithium ion transport"/>
    <property type="evidence" value="ECO:0000314"/>
    <property type="project" value="UniProtKB"/>
</dbReference>
<dbReference type="GO" id="GO:2001206">
    <property type="term" value="P:positive regulation of osteoclast development"/>
    <property type="evidence" value="ECO:0007669"/>
    <property type="project" value="Ensembl"/>
</dbReference>
<dbReference type="GO" id="GO:0061178">
    <property type="term" value="P:regulation of insulin secretion involved in cellular response to glucose stimulus"/>
    <property type="evidence" value="ECO:0007669"/>
    <property type="project" value="Ensembl"/>
</dbReference>
<dbReference type="GO" id="GO:0055078">
    <property type="term" value="P:sodium ion homeostasis"/>
    <property type="evidence" value="ECO:0000250"/>
    <property type="project" value="UniProtKB"/>
</dbReference>
<dbReference type="GO" id="GO:0006814">
    <property type="term" value="P:sodium ion transport"/>
    <property type="evidence" value="ECO:0000314"/>
    <property type="project" value="UniProtKB"/>
</dbReference>
<dbReference type="FunFam" id="1.20.1530.20:FF:000012">
    <property type="entry name" value="sodium/hydrogen exchanger 9B2 isoform X1"/>
    <property type="match status" value="1"/>
</dbReference>
<dbReference type="Gene3D" id="1.20.1530.20">
    <property type="match status" value="1"/>
</dbReference>
<dbReference type="InterPro" id="IPR006153">
    <property type="entry name" value="Cation/H_exchanger_TM"/>
</dbReference>
<dbReference type="InterPro" id="IPR051843">
    <property type="entry name" value="CPA1_transporter"/>
</dbReference>
<dbReference type="InterPro" id="IPR038770">
    <property type="entry name" value="Na+/solute_symporter_sf"/>
</dbReference>
<dbReference type="PANTHER" id="PTHR31102">
    <property type="match status" value="1"/>
</dbReference>
<dbReference type="PANTHER" id="PTHR31102:SF14">
    <property type="entry name" value="SODIUM_HYDROGEN EXCHANGER 9B2"/>
    <property type="match status" value="1"/>
</dbReference>
<dbReference type="Pfam" id="PF00999">
    <property type="entry name" value="Na_H_Exchanger"/>
    <property type="match status" value="1"/>
</dbReference>
<keyword id="KW-0002">3D-structure</keyword>
<keyword id="KW-1003">Cell membrane</keyword>
<keyword id="KW-0966">Cell projection</keyword>
<keyword id="KW-0969">Cilium</keyword>
<keyword id="KW-0968">Cytoplasmic vesicle</keyword>
<keyword id="KW-0967">Endosome</keyword>
<keyword id="KW-0282">Flagellum</keyword>
<keyword id="KW-0458">Lysosome</keyword>
<keyword id="KW-0472">Membrane</keyword>
<keyword id="KW-0479">Metal-binding</keyword>
<keyword id="KW-0496">Mitochondrion</keyword>
<keyword id="KW-1185">Reference proteome</keyword>
<keyword id="KW-0915">Sodium</keyword>
<keyword id="KW-0770">Synapse</keyword>
<keyword id="KW-0812">Transmembrane</keyword>
<keyword id="KW-1133">Transmembrane helix</keyword>
<protein>
    <recommendedName>
        <fullName>Sodium/hydrogen exchanger 9B2</fullName>
    </recommendedName>
    <alternativeName>
        <fullName>Na(+)/H(+) exchanger NHA2</fullName>
    </alternativeName>
    <alternativeName>
        <fullName>Na(+)/H(+) exchanger-like domain-containing protein 2</fullName>
        <shortName>NHE domain-containing protein 2</shortName>
    </alternativeName>
    <alternativeName>
        <fullName>Sodium/hydrogen exchanger-like domain-containing protein 2</fullName>
    </alternativeName>
    <alternativeName>
        <fullName>Solute carrier family 9 subfamily B member 2</fullName>
    </alternativeName>
</protein>
<reference key="1">
    <citation type="journal article" date="2022" name="Nat. Struct. Mol. Biol.">
        <title>Structure, mechanism and lipid-mediated remodeling of the mammalian Na(+)/H(+) exchanger NHA2.</title>
        <authorList>
            <person name="Matsuoka R."/>
            <person name="Fudim R."/>
            <person name="Jung S."/>
            <person name="Zhang C."/>
            <person name="Bazzone A."/>
            <person name="Chatzikyriakidou Y."/>
            <person name="Robinson C.V."/>
            <person name="Nomura N."/>
            <person name="Iwata S."/>
            <person name="Landreh M."/>
            <person name="Orellana L."/>
            <person name="Beckstein O."/>
            <person name="Drew D."/>
        </authorList>
    </citation>
    <scope>STRUCTURE BY ELECTRON MICROSCOPY (3.04 ANGSTROMS)</scope>
    <scope>FUNCTION</scope>
    <scope>CATALYTIC ACTIVITY</scope>
    <scope>TOPOLOGY</scope>
    <scope>SUBUNIT</scope>
    <scope>SUBCELLULAR LOCATION</scope>
    <scope>MUTAGENESIS OF GLU-214; ASP-277; ASP-278; 330-ASP-GLN-331 AND ARG-431</scope>
</reference>
<sequence length="535" mass="57374">MRNQDKRAAHKDSEPSTEVNHTASSYQGRQQETGMNLRGIDGNEPTEGSNLLNNNEKMQGTPAEPNHLQRRRQIHACPPRGLLARVITNVTMVILLWAVVWSVTGSECLPGGNLFGIIMLFYCAIIGGKLFGLIKLPTLPPLPPLLGMLLAGFLIRNVPVISDNIQIKHKWSSALRSIALSVILVRAGLGLDSNALKKLKGVCVRLSLGPCLIEACTSAVLAYFLMGLPWQWGFMLGFVLGAVSPAVVVPSMLLLQEGGYGVEKGIPTLLMAAGSFDDILAITGFNTCLGMAFSTGSTVFNVLKGVLEVIIGVVTGLVLGFFIQYFPSSDQDNLVWKRAFLVLGLSVLAVFSSTYFGFPGSGGLCTLVTAFLAGRGWASTKTDVEKVIAVAWDIFQPLLFGLIGAEVLITALRPETIGLCVATLGIAVLIRILVTYLMVCFAGFNIKEKIFISFAWLPKATVQAAIGSVALDTARSHGEKQLEGYGMDVLTVAFLSIIITAPVGSLLIGLLGPRLLQKAEQNKDEEDQGETSIQV</sequence>
<accession>A0A6P3HVI0</accession>
<comment type="function">
    <text evidence="1 2 4">Electroneutral Na(+) Li(+)/H(+) antiporter that extrudes Na(+) or Li(+) in exchange for external protons across the membrane (PubMed:35173351). Uses the proton gradient/membrane potential to extrude sodium (By similarity). Contributes to the regulation of intracellular pH and sodium homeostasis (By similarity). Also able to mediate Na(+)/Li(+) antiporter activity in kidney (By similarity). May play a physiological role in renal tubular function and blood pressure homeostasis (By similarity). Plays an important role for insulin secretion and clathrin-mediated endocytosis in beta-cells. Involved in sperm motility and fertility. It is controversial whether SLC9B2 plays a role in osteoclast differentiation or not (By similarity).</text>
</comment>
<comment type="catalytic activity">
    <reaction evidence="4">
        <text>Li(+)(out) + H(+)(in) = Li(+)(in) + H(+)(out)</text>
        <dbReference type="Rhea" id="RHEA:72407"/>
        <dbReference type="ChEBI" id="CHEBI:15378"/>
        <dbReference type="ChEBI" id="CHEBI:49713"/>
    </reaction>
</comment>
<comment type="catalytic activity">
    <reaction evidence="2">
        <text>Li(+)(in) + Na(+)(out) = Li(+)(out) + Na(+)(in)</text>
        <dbReference type="Rhea" id="RHEA:72415"/>
        <dbReference type="ChEBI" id="CHEBI:29101"/>
        <dbReference type="ChEBI" id="CHEBI:49713"/>
    </reaction>
</comment>
<comment type="catalytic activity">
    <reaction evidence="4">
        <text>Na(+)(in) + H(+)(out) = Na(+)(out) + H(+)(in)</text>
        <dbReference type="Rhea" id="RHEA:29419"/>
        <dbReference type="ChEBI" id="CHEBI:15378"/>
        <dbReference type="ChEBI" id="CHEBI:29101"/>
    </reaction>
</comment>
<comment type="activity regulation">
    <text evidence="2">Allosterically inhibited by the N-terminal domain. Inhibited by phloretin.</text>
</comment>
<comment type="subunit">
    <text evidence="4">Homodimer; dimerization is essential for SLC9B2 activity. Lipids seem to play a role in the stabilization of the dimerization subdomain.</text>
</comment>
<comment type="subcellular location">
    <subcellularLocation>
        <location evidence="4">Cell membrane</location>
        <topology evidence="4">Multi-pass membrane protein</topology>
    </subcellularLocation>
    <subcellularLocation>
        <location evidence="1">Mitochondrion membrane</location>
        <topology evidence="4">Multi-pass membrane protein</topology>
    </subcellularLocation>
    <subcellularLocation>
        <location evidence="1">Endosome membrane</location>
        <topology evidence="4">Multi-pass membrane protein</topology>
    </subcellularLocation>
    <subcellularLocation>
        <location evidence="1">Recycling endosome membrane</location>
        <topology evidence="4">Multi-pass membrane protein</topology>
    </subcellularLocation>
    <subcellularLocation>
        <location evidence="1">Lysosome membrane</location>
        <topology evidence="4">Multi-pass membrane protein</topology>
    </subcellularLocation>
    <subcellularLocation>
        <location evidence="1">Cytoplasmic vesicle</location>
        <location evidence="1">Secretory vesicle</location>
        <location evidence="1">Synaptic vesicle membrane</location>
        <topology evidence="4">Multi-pass membrane protein</topology>
    </subcellularLocation>
    <subcellularLocation>
        <location evidence="1">Cell projection</location>
        <location evidence="1">Cilium</location>
        <location evidence="1">Flagellum membrane</location>
        <topology evidence="4">Multi-pass membrane protein</topology>
    </subcellularLocation>
    <subcellularLocation>
        <location evidence="1">Basolateral cell membrane</location>
        <topology evidence="4">Multi-pass membrane protein</topology>
    </subcellularLocation>
    <subcellularLocation>
        <location evidence="1">Apical cell membrane</location>
        <topology evidence="4">Multi-pass membrane protein</topology>
    </subcellularLocation>
</comment>
<comment type="miscellaneous">
    <text evidence="1">The subcellular localization of SLC9B2 remains controversial. Was initially thought to partially localize to mitochondria. However SLC9B2 does not seem to contain a mitochondrial targeting sequence. It was later established that its localizes predominantly in plasma membrane or intracellularly to endosomes and lysosomes (By similarity). In another recent study, endogenous SLC9B2 in the distal tubular cell line mpkDCT4 is detected in recycling endosomes but absent in plasma membrane (By similarity).</text>
</comment>
<comment type="similarity">
    <text evidence="5">Belongs to the monovalent cation:proton antiporter 1 (CPA1) transporter (TC 2.A.36) family.</text>
</comment>
<feature type="chain" id="PRO_0000458089" description="Sodium/hydrogen exchanger 9B2">
    <location>
        <begin position="1"/>
        <end position="535"/>
    </location>
</feature>
<feature type="topological domain" description="Cytoplasmic" evidence="5">
    <location>
        <begin position="1"/>
        <end position="85"/>
    </location>
</feature>
<feature type="transmembrane region" description="Helical; Name=1" evidence="4 6">
    <location>
        <begin position="86"/>
        <end position="103"/>
    </location>
</feature>
<feature type="topological domain" description="Extracellular" evidence="5">
    <location>
        <begin position="104"/>
        <end position="112"/>
    </location>
</feature>
<feature type="transmembrane region" description="Helical; Name=2" evidence="4 6">
    <location>
        <begin position="113"/>
        <end position="132"/>
    </location>
</feature>
<feature type="topological domain" description="Cytoplasmic" evidence="5">
    <location>
        <begin position="133"/>
        <end position="143"/>
    </location>
</feature>
<feature type="transmembrane region" description="Helical; Name=3" evidence="4 6">
    <location>
        <begin position="144"/>
        <end position="160"/>
    </location>
</feature>
<feature type="topological domain" description="Extracellular" evidence="5">
    <location>
        <begin position="161"/>
        <end position="170"/>
    </location>
</feature>
<feature type="transmembrane region" description="Helical; Name=4" evidence="4 6">
    <location>
        <begin position="171"/>
        <end position="188"/>
    </location>
</feature>
<feature type="topological domain" description="Cytoplasmic" evidence="5">
    <location>
        <begin position="189"/>
        <end position="199"/>
    </location>
</feature>
<feature type="transmembrane region" description="Helical; Name=5" evidence="4 6">
    <location>
        <begin position="200"/>
        <end position="226"/>
    </location>
</feature>
<feature type="topological domain" description="Extracellular" evidence="5">
    <location>
        <begin position="227"/>
        <end position="232"/>
    </location>
</feature>
<feature type="transmembrane region" description="Helical; Name=6" evidence="4 6">
    <location>
        <begin position="233"/>
        <end position="241"/>
    </location>
</feature>
<feature type="topological domain" description="Cytoplasmic" evidence="5">
    <location>
        <begin position="242"/>
        <end position="269"/>
    </location>
</feature>
<feature type="transmembrane region" description="Helical; Name=7" evidence="4 6">
    <location>
        <begin position="270"/>
        <end position="289"/>
    </location>
</feature>
<feature type="topological domain" description="Extracellular" evidence="5">
    <location>
        <begin position="290"/>
        <end position="299"/>
    </location>
</feature>
<feature type="transmembrane region" description="Helical; Name=8" evidence="4 6">
    <location>
        <begin position="300"/>
        <end position="323"/>
    </location>
</feature>
<feature type="topological domain" description="Cytoplasmic" evidence="5">
    <location>
        <begin position="324"/>
        <end position="338"/>
    </location>
</feature>
<feature type="transmembrane region" description="Helical; Name=9" evidence="4 6">
    <location>
        <begin position="339"/>
        <end position="356"/>
    </location>
</feature>
<feature type="topological domain" description="Extracellular" evidence="5">
    <location>
        <begin position="357"/>
        <end position="360"/>
    </location>
</feature>
<feature type="transmembrane region" description="Helical; Name=10" evidence="4 6">
    <location>
        <begin position="361"/>
        <end position="372"/>
    </location>
</feature>
<feature type="topological domain" description="Cytoplasmic" evidence="5">
    <location>
        <begin position="373"/>
        <end position="389"/>
    </location>
</feature>
<feature type="transmembrane region" description="Helical; Name=11" evidence="4 6">
    <location>
        <begin position="390"/>
        <end position="410"/>
    </location>
</feature>
<feature type="topological domain" description="Extracellular" evidence="5">
    <location>
        <begin position="411"/>
        <end position="416"/>
    </location>
</feature>
<feature type="transmembrane region" description="Helical; Name=12" evidence="4 6">
    <location>
        <begin position="417"/>
        <end position="439"/>
    </location>
</feature>
<feature type="topological domain" description="Cytoplasmic" evidence="5">
    <location>
        <begin position="440"/>
        <end position="460"/>
    </location>
</feature>
<feature type="transmembrane region" description="Helical; Name=13" evidence="4 6">
    <location>
        <begin position="461"/>
        <end position="472"/>
    </location>
</feature>
<feature type="topological domain" description="Extracellular" evidence="5">
    <location>
        <begin position="473"/>
        <end position="485"/>
    </location>
</feature>
<feature type="transmembrane region" description="Helical; Name=14" evidence="4 6">
    <location>
        <begin position="486"/>
        <end position="508"/>
    </location>
</feature>
<feature type="topological domain" description="Cytoplasmic" evidence="5">
    <location>
        <begin position="509"/>
        <end position="535"/>
    </location>
</feature>
<feature type="region of interest" description="Disordered" evidence="3">
    <location>
        <begin position="1"/>
        <end position="70"/>
    </location>
</feature>
<feature type="compositionally biased region" description="Basic and acidic residues" evidence="3">
    <location>
        <begin position="1"/>
        <end position="14"/>
    </location>
</feature>
<feature type="compositionally biased region" description="Polar residues" evidence="3">
    <location>
        <begin position="16"/>
        <end position="34"/>
    </location>
</feature>
<feature type="compositionally biased region" description="Polar residues" evidence="3">
    <location>
        <begin position="46"/>
        <end position="58"/>
    </location>
</feature>
<feature type="binding site" evidence="2">
    <location>
        <position position="243"/>
    </location>
    <ligand>
        <name>Na(+)</name>
        <dbReference type="ChEBI" id="CHEBI:29101"/>
    </ligand>
</feature>
<feature type="binding site" evidence="2">
    <location>
        <position position="274"/>
    </location>
    <ligand>
        <name>Na(+)</name>
        <dbReference type="ChEBI" id="CHEBI:29101"/>
    </ligand>
</feature>
<feature type="binding site" evidence="2">
    <location>
        <position position="277"/>
    </location>
    <ligand>
        <name>Na(+)</name>
        <dbReference type="ChEBI" id="CHEBI:29101"/>
    </ligand>
</feature>
<feature type="binding site" evidence="2">
    <location>
        <position position="278"/>
    </location>
    <ligand>
        <name>Na(+)</name>
        <dbReference type="ChEBI" id="CHEBI:29101"/>
    </ligand>
</feature>
<feature type="mutagenesis site" description="Shifts the specificity from Na(+) to Li(+); when associated with E-431." evidence="4">
    <original>E</original>
    <variation>R</variation>
    <location>
        <position position="214"/>
    </location>
</feature>
<feature type="mutagenesis site" description="Abolishes Na(+) Li(+)/H(+) antiporter." evidence="4">
    <original>DD</original>
    <variation>CC</variation>
    <location>
        <begin position="277"/>
        <end position="278"/>
    </location>
</feature>
<feature type="mutagenesis site" description="Abolishes dimerization. Abolishes Na(+) Li(+)/H(+) antiporter activity." evidence="4">
    <original>DQ</original>
    <variation>AA</variation>
    <location>
        <begin position="330"/>
        <end position="331"/>
    </location>
</feature>
<feature type="mutagenesis site" description="Shifts the specificity from Na(+) to Li(+); when associated with R-214." evidence="4">
    <original>R</original>
    <variation>E</variation>
    <location>
        <position position="431"/>
    </location>
</feature>
<feature type="helix" evidence="7">
    <location>
        <begin position="71"/>
        <end position="76"/>
    </location>
</feature>
<feature type="helix" evidence="8">
    <location>
        <begin position="81"/>
        <end position="103"/>
    </location>
</feature>
<feature type="strand" evidence="8">
    <location>
        <begin position="105"/>
        <end position="107"/>
    </location>
</feature>
<feature type="helix" evidence="8">
    <location>
        <begin position="113"/>
        <end position="133"/>
    </location>
</feature>
<feature type="strand" evidence="8">
    <location>
        <begin position="138"/>
        <end position="140"/>
    </location>
</feature>
<feature type="helix" evidence="8">
    <location>
        <begin position="144"/>
        <end position="156"/>
    </location>
</feature>
<feature type="helix" evidence="8">
    <location>
        <begin position="159"/>
        <end position="161"/>
    </location>
</feature>
<feature type="strand" evidence="8">
    <location>
        <begin position="163"/>
        <end position="165"/>
    </location>
</feature>
<feature type="helix" evidence="8">
    <location>
        <begin position="169"/>
        <end position="189"/>
    </location>
</feature>
<feature type="helix" evidence="8">
    <location>
        <begin position="195"/>
        <end position="198"/>
    </location>
</feature>
<feature type="helix" evidence="8">
    <location>
        <begin position="201"/>
        <end position="222"/>
    </location>
</feature>
<feature type="turn" evidence="8">
    <location>
        <begin position="223"/>
        <end position="225"/>
    </location>
</feature>
<feature type="helix" evidence="8">
    <location>
        <begin position="230"/>
        <end position="240"/>
    </location>
</feature>
<feature type="helix" evidence="8">
    <location>
        <begin position="245"/>
        <end position="258"/>
    </location>
</feature>
<feature type="helix" evidence="8">
    <location>
        <begin position="266"/>
        <end position="273"/>
    </location>
</feature>
<feature type="turn" evidence="8">
    <location>
        <begin position="274"/>
        <end position="276"/>
    </location>
</feature>
<feature type="helix" evidence="8">
    <location>
        <begin position="277"/>
        <end position="292"/>
    </location>
</feature>
<feature type="helix" evidence="8">
    <location>
        <begin position="301"/>
        <end position="320"/>
    </location>
</feature>
<feature type="turn" evidence="8">
    <location>
        <begin position="321"/>
        <end position="323"/>
    </location>
</feature>
<feature type="strand" evidence="8">
    <location>
        <begin position="324"/>
        <end position="327"/>
    </location>
</feature>
<feature type="strand" evidence="7">
    <location>
        <begin position="329"/>
        <end position="332"/>
    </location>
</feature>
<feature type="helix" evidence="8">
    <location>
        <begin position="334"/>
        <end position="356"/>
    </location>
</feature>
<feature type="helix" evidence="8">
    <location>
        <begin position="361"/>
        <end position="376"/>
    </location>
</feature>
<feature type="helix" evidence="8">
    <location>
        <begin position="381"/>
        <end position="403"/>
    </location>
</feature>
<feature type="turn" evidence="7">
    <location>
        <begin position="409"/>
        <end position="412"/>
    </location>
</feature>
<feature type="helix" evidence="8">
    <location>
        <begin position="418"/>
        <end position="438"/>
    </location>
</feature>
<feature type="strand" evidence="8">
    <location>
        <begin position="441"/>
        <end position="443"/>
    </location>
</feature>
<feature type="helix" evidence="8">
    <location>
        <begin position="447"/>
        <end position="454"/>
    </location>
</feature>
<feature type="helix" evidence="8">
    <location>
        <begin position="461"/>
        <end position="477"/>
    </location>
</feature>
<feature type="helix" evidence="8">
    <location>
        <begin position="480"/>
        <end position="515"/>
    </location>
</feature>